<accession>F4KHQ8</accession>
<accession>Q93ZI6</accession>
<accession>Q9FIL4</accession>
<name>NCER3_ARATH</name>
<feature type="signal peptide" evidence="6">
    <location>
        <begin position="1"/>
        <end position="25"/>
    </location>
</feature>
<feature type="chain" id="PRO_5003311651" description="Neutral ceramidase 3">
    <location>
        <begin position="26"/>
        <end position="733"/>
    </location>
</feature>
<feature type="active site" description="Nucleophile" evidence="4">
    <location>
        <position position="307"/>
    </location>
</feature>
<feature type="glycosylation site" description="N-linked (GlcNAc...) asparagine" evidence="7">
    <location>
        <position position="325"/>
    </location>
</feature>
<feature type="splice variant" id="VSP_058913" description="In isoform 2.">
    <original>MTRWSMSMHCTLFLLFLLRLTCIFSDSDYLMGLGSYDITGPAADVNMMGYANMEQVASGVHFRLRARAFIVAEPYKKRIAFVNLDAGMASQLVTIKVIERLKQRYGELYTEENVAISGTHTHAGPGGYLQYILYLVTSLGFVHQSFNALVDGIEQSIIQAHENLRPGSILINKGELLDAGVNRSPSAYLNNPAHERSKYEYDVDKEMTLVKFVDDQWGPVARIMEDWFERENGCRSVDVESPRRVSSIISDPYDQDLMEMASSLLSTGGKTVTRMSSVARRVRSRFRHADKPRFVSAFCQTNCGDVSPNVLGAFCIDTGLPCEFNQSTCGGKNEQCYGRGPGYPDEFESTRIIGERQFKKAADLFTKASEEIQGKVDYRHAYVDFSQLEVTINGQNGGSEVVKTCPAAMGFGFAAGTTDGPGAFDFKQGDDQ</original>
    <variation>MFSTILYVVTLCK</variation>
    <location>
        <begin position="1"/>
        <end position="432"/>
    </location>
</feature>
<gene>
    <name evidence="9" type="primary">NCER3</name>
    <name evidence="11" type="ordered locus">At5g58980</name>
    <name evidence="12" type="ORF">K19M22.17</name>
</gene>
<protein>
    <recommendedName>
        <fullName evidence="9">Neutral ceramidase 3</fullName>
        <shortName evidence="9">AtNCER3</shortName>
        <shortName evidence="9">N-CDase 3</shortName>
        <shortName evidence="9">NCDase 3</shortName>
        <ecNumber evidence="2">3.5.1.23</ecNumber>
    </recommendedName>
    <alternativeName>
        <fullName>Acylsphingosine deacylase 3</fullName>
    </alternativeName>
    <alternativeName>
        <fullName>N-acylsphingosine amidohydrolase 3</fullName>
    </alternativeName>
</protein>
<evidence type="ECO:0000250" key="1">
    <source>
        <dbReference type="UniProtKB" id="F4HQM3"/>
    </source>
</evidence>
<evidence type="ECO:0000250" key="2">
    <source>
        <dbReference type="UniProtKB" id="O06769"/>
    </source>
</evidence>
<evidence type="ECO:0000250" key="3">
    <source>
        <dbReference type="UniProtKB" id="Q0JL46"/>
    </source>
</evidence>
<evidence type="ECO:0000250" key="4">
    <source>
        <dbReference type="UniProtKB" id="Q9NR71"/>
    </source>
</evidence>
<evidence type="ECO:0000250" key="5">
    <source>
        <dbReference type="UniProtKB" id="Q9VA70"/>
    </source>
</evidence>
<evidence type="ECO:0000255" key="6"/>
<evidence type="ECO:0000255" key="7">
    <source>
        <dbReference type="PROSITE-ProRule" id="PRU00498"/>
    </source>
</evidence>
<evidence type="ECO:0000269" key="8">
    <source>
    </source>
</evidence>
<evidence type="ECO:0000303" key="9">
    <source>
    </source>
</evidence>
<evidence type="ECO:0000305" key="10"/>
<evidence type="ECO:0000312" key="11">
    <source>
        <dbReference type="Araport" id="AT5G58980"/>
    </source>
</evidence>
<evidence type="ECO:0000312" key="12">
    <source>
        <dbReference type="EMBL" id="BAB09641.1"/>
    </source>
</evidence>
<dbReference type="EC" id="3.5.1.23" evidence="2"/>
<dbReference type="EMBL" id="AB016885">
    <property type="protein sequence ID" value="BAB09641.1"/>
    <property type="status" value="ALT_SEQ"/>
    <property type="molecule type" value="Genomic_DNA"/>
</dbReference>
<dbReference type="EMBL" id="CP002688">
    <property type="protein sequence ID" value="AED97126.1"/>
    <property type="molecule type" value="Genomic_DNA"/>
</dbReference>
<dbReference type="EMBL" id="AY057506">
    <property type="protein sequence ID" value="AAL09747.1"/>
    <property type="molecule type" value="mRNA"/>
</dbReference>
<dbReference type="RefSeq" id="NP_200706.1">
    <molecule id="F4KHQ8-1"/>
    <property type="nucleotide sequence ID" value="NM_125288.4"/>
</dbReference>
<dbReference type="SMR" id="F4KHQ8"/>
<dbReference type="FunCoup" id="F4KHQ8">
    <property type="interactions" value="574"/>
</dbReference>
<dbReference type="STRING" id="3702.F4KHQ8"/>
<dbReference type="GlyCosmos" id="F4KHQ8">
    <property type="glycosylation" value="1 site, No reported glycans"/>
</dbReference>
<dbReference type="GlyGen" id="F4KHQ8">
    <property type="glycosylation" value="1 site"/>
</dbReference>
<dbReference type="PaxDb" id="3702-AT5G58980.1"/>
<dbReference type="ProteomicsDB" id="251206">
    <molecule id="F4KHQ8-1"/>
</dbReference>
<dbReference type="EnsemblPlants" id="AT5G58980.1">
    <molecule id="F4KHQ8-1"/>
    <property type="protein sequence ID" value="AT5G58980.1"/>
    <property type="gene ID" value="AT5G58980"/>
</dbReference>
<dbReference type="GeneID" id="836015"/>
<dbReference type="Gramene" id="AT5G58980.1">
    <molecule id="F4KHQ8-1"/>
    <property type="protein sequence ID" value="AT5G58980.1"/>
    <property type="gene ID" value="AT5G58980"/>
</dbReference>
<dbReference type="KEGG" id="ath:AT5G58980"/>
<dbReference type="Araport" id="AT5G58980"/>
<dbReference type="TAIR" id="AT5G58980">
    <property type="gene designation" value="ATNCER3"/>
</dbReference>
<dbReference type="eggNOG" id="KOG2232">
    <property type="taxonomic scope" value="Eukaryota"/>
</dbReference>
<dbReference type="HOGENOM" id="CLU_011300_2_0_1"/>
<dbReference type="InParanoid" id="F4KHQ8"/>
<dbReference type="OMA" id="GRETWVP"/>
<dbReference type="PRO" id="PR:F4KHQ8"/>
<dbReference type="Proteomes" id="UP000006548">
    <property type="component" value="Chromosome 5"/>
</dbReference>
<dbReference type="ExpressionAtlas" id="F4KHQ8">
    <property type="expression patterns" value="baseline and differential"/>
</dbReference>
<dbReference type="GO" id="GO:0005783">
    <property type="term" value="C:endoplasmic reticulum"/>
    <property type="evidence" value="ECO:0007669"/>
    <property type="project" value="UniProtKB-SubCell"/>
</dbReference>
<dbReference type="GO" id="GO:0005576">
    <property type="term" value="C:extracellular region"/>
    <property type="evidence" value="ECO:0007669"/>
    <property type="project" value="UniProtKB-SubCell"/>
</dbReference>
<dbReference type="GO" id="GO:0005794">
    <property type="term" value="C:Golgi apparatus"/>
    <property type="evidence" value="ECO:0007669"/>
    <property type="project" value="UniProtKB-SubCell"/>
</dbReference>
<dbReference type="GO" id="GO:0016020">
    <property type="term" value="C:membrane"/>
    <property type="evidence" value="ECO:0007669"/>
    <property type="project" value="GOC"/>
</dbReference>
<dbReference type="GO" id="GO:0017040">
    <property type="term" value="F:N-acylsphingosine amidohydrolase activity"/>
    <property type="evidence" value="ECO:0007669"/>
    <property type="project" value="UniProtKB-EC"/>
</dbReference>
<dbReference type="GO" id="GO:0034599">
    <property type="term" value="P:cellular response to oxidative stress"/>
    <property type="evidence" value="ECO:0000315"/>
    <property type="project" value="UniProtKB"/>
</dbReference>
<dbReference type="GO" id="GO:0046514">
    <property type="term" value="P:ceramide catabolic process"/>
    <property type="evidence" value="ECO:0007669"/>
    <property type="project" value="InterPro"/>
</dbReference>
<dbReference type="FunFam" id="2.60.40.2300:FF:000002">
    <property type="entry name" value="Neutral/alkaline non-lysosomal ceramidase"/>
    <property type="match status" value="1"/>
</dbReference>
<dbReference type="Gene3D" id="2.60.40.2300">
    <property type="entry name" value="Neutral/alkaline non-lysosomal ceramidase, C-terminal domain"/>
    <property type="match status" value="1"/>
</dbReference>
<dbReference type="InterPro" id="IPR006823">
    <property type="entry name" value="Ceramidase_alk"/>
</dbReference>
<dbReference type="InterPro" id="IPR038445">
    <property type="entry name" value="NCDase_C_sf"/>
</dbReference>
<dbReference type="InterPro" id="IPR031331">
    <property type="entry name" value="NEUT/ALK_ceramidase_C"/>
</dbReference>
<dbReference type="InterPro" id="IPR031329">
    <property type="entry name" value="NEUT/ALK_ceramidase_N"/>
</dbReference>
<dbReference type="PANTHER" id="PTHR12670">
    <property type="entry name" value="CERAMIDASE"/>
    <property type="match status" value="1"/>
</dbReference>
<dbReference type="PANTHER" id="PTHR12670:SF1">
    <property type="entry name" value="NEUTRAL CERAMIDASE"/>
    <property type="match status" value="1"/>
</dbReference>
<dbReference type="Pfam" id="PF04734">
    <property type="entry name" value="Ceramidase_alk"/>
    <property type="match status" value="1"/>
</dbReference>
<dbReference type="Pfam" id="PF17048">
    <property type="entry name" value="Ceramidse_alk_C"/>
    <property type="match status" value="1"/>
</dbReference>
<proteinExistence type="evidence at transcript level"/>
<keyword id="KW-0025">Alternative splicing</keyword>
<keyword id="KW-0256">Endoplasmic reticulum</keyword>
<keyword id="KW-0325">Glycoprotein</keyword>
<keyword id="KW-0333">Golgi apparatus</keyword>
<keyword id="KW-0378">Hydrolase</keyword>
<keyword id="KW-0443">Lipid metabolism</keyword>
<keyword id="KW-1185">Reference proteome</keyword>
<keyword id="KW-0964">Secreted</keyword>
<keyword id="KW-0732">Signal</keyword>
<keyword id="KW-0746">Sphingolipid metabolism</keyword>
<sequence>MTRWSMSMHCTLFLLFLLRLTCIFSDSDYLMGLGSYDITGPAADVNMMGYANMEQVASGVHFRLRARAFIVAEPYKKRIAFVNLDAGMASQLVTIKVIERLKQRYGELYTEENVAISGTHTHAGPGGYLQYILYLVTSLGFVHQSFNALVDGIEQSIIQAHENLRPGSILINKGELLDAGVNRSPSAYLNNPAHERSKYEYDVDKEMTLVKFVDDQWGPVARIMEDWFERENGCRSVDVESPRRVSSIISDPYDQDLMEMASSLLSTGGKTVTRMSSVARRVRSRFRHADKPRFVSAFCQTNCGDVSPNVLGAFCIDTGLPCEFNQSTCGGKNEQCYGRGPGYPDEFESTRIIGERQFKKAADLFTKASEEIQGKVDYRHAYVDFSQLEVTINGQNGGSEVVKTCPAAMGFGFAAGTTDGPGAFDFKQGDDQGNPFWRLVRNLLKNPTEEQVRCQRPKPILLDTGEMKQPYDWAPSILPVQILRIGQLVILCVPGEFTTMAGRRLRDAVKTVLKEGSNGREFSVVIAGLTNSYSQYIATFEEYQVQRYEGASTLYGPHTLSGYIQEFKKLANDLLSAQTTDPGPQPPDLLHKQISLLTPVVADMTPIGTAFGDVTSDVPRLSKFRKGADIVRVQFRSANPRNDLMTEGTFALVERWLEGRETWVPVYDDDDFCLRFKWSRPFKLSTQSTATIEWRIPETASPGVYRITHFGSAKTPISSIHHFSGSSSAFVVY</sequence>
<comment type="function">
    <text evidence="1 8">Hydrolyzes the sphingolipid ceramide into sphingosine and free fatty acid (By similarity). Promotes oxidative stress resistance (PubMed:26150824).</text>
</comment>
<comment type="catalytic activity">
    <reaction evidence="2">
        <text>an N-acylsphing-4-enine + H2O = sphing-4-enine + a fatty acid</text>
        <dbReference type="Rhea" id="RHEA:20856"/>
        <dbReference type="ChEBI" id="CHEBI:15377"/>
        <dbReference type="ChEBI" id="CHEBI:28868"/>
        <dbReference type="ChEBI" id="CHEBI:52639"/>
        <dbReference type="ChEBI" id="CHEBI:57756"/>
        <dbReference type="EC" id="3.5.1.23"/>
    </reaction>
</comment>
<comment type="subcellular location">
    <subcellularLocation>
        <location evidence="5">Secreted</location>
    </subcellularLocation>
    <subcellularLocation>
        <location evidence="1">Endoplasmic reticulum</location>
    </subcellularLocation>
    <subcellularLocation>
        <location evidence="3">Golgi apparatus</location>
    </subcellularLocation>
</comment>
<comment type="alternative products">
    <event type="alternative splicing"/>
    <isoform>
        <id>F4KHQ8-1</id>
        <name>1</name>
        <sequence type="displayed"/>
    </isoform>
    <isoform>
        <id>F4KHQ8-2</id>
        <name>2</name>
        <sequence type="described" ref="VSP_058913"/>
    </isoform>
</comment>
<comment type="disruption phenotype">
    <text evidence="8">Increased sensitivity to C2-ceramide induced cell death.</text>
</comment>
<comment type="similarity">
    <text evidence="10">Belongs to the neutral ceramidase family.</text>
</comment>
<comment type="sequence caution" evidence="10">
    <conflict type="erroneous gene model prediction">
        <sequence resource="EMBL-CDS" id="BAB09641"/>
    </conflict>
</comment>
<organism>
    <name type="scientific">Arabidopsis thaliana</name>
    <name type="common">Mouse-ear cress</name>
    <dbReference type="NCBI Taxonomy" id="3702"/>
    <lineage>
        <taxon>Eukaryota</taxon>
        <taxon>Viridiplantae</taxon>
        <taxon>Streptophyta</taxon>
        <taxon>Embryophyta</taxon>
        <taxon>Tracheophyta</taxon>
        <taxon>Spermatophyta</taxon>
        <taxon>Magnoliopsida</taxon>
        <taxon>eudicotyledons</taxon>
        <taxon>Gunneridae</taxon>
        <taxon>Pentapetalae</taxon>
        <taxon>rosids</taxon>
        <taxon>malvids</taxon>
        <taxon>Brassicales</taxon>
        <taxon>Brassicaceae</taxon>
        <taxon>Camelineae</taxon>
        <taxon>Arabidopsis</taxon>
    </lineage>
</organism>
<reference key="1">
    <citation type="journal article" date="1998" name="DNA Res.">
        <title>Structural analysis of Arabidopsis thaliana chromosome 5. VIII. Sequence features of the regions of 1,081,958 bp covered by seventeen physically assigned P1 and TAC clones.</title>
        <authorList>
            <person name="Asamizu E."/>
            <person name="Sato S."/>
            <person name="Kaneko T."/>
            <person name="Nakamura Y."/>
            <person name="Kotani H."/>
            <person name="Miyajima N."/>
            <person name="Tabata S."/>
        </authorList>
    </citation>
    <scope>NUCLEOTIDE SEQUENCE [LARGE SCALE GENOMIC DNA]</scope>
    <source>
        <strain>cv. Columbia</strain>
    </source>
</reference>
<reference key="2">
    <citation type="journal article" date="2017" name="Plant J.">
        <title>Araport11: a complete reannotation of the Arabidopsis thaliana reference genome.</title>
        <authorList>
            <person name="Cheng C.Y."/>
            <person name="Krishnakumar V."/>
            <person name="Chan A.P."/>
            <person name="Thibaud-Nissen F."/>
            <person name="Schobel S."/>
            <person name="Town C.D."/>
        </authorList>
    </citation>
    <scope>GENOME REANNOTATION</scope>
    <source>
        <strain>cv. Columbia</strain>
    </source>
</reference>
<reference key="3">
    <citation type="journal article" date="2003" name="Science">
        <title>Empirical analysis of transcriptional activity in the Arabidopsis genome.</title>
        <authorList>
            <person name="Yamada K."/>
            <person name="Lim J."/>
            <person name="Dale J.M."/>
            <person name="Chen H."/>
            <person name="Shinn P."/>
            <person name="Palm C.J."/>
            <person name="Southwick A.M."/>
            <person name="Wu H.C."/>
            <person name="Kim C.J."/>
            <person name="Nguyen M."/>
            <person name="Pham P.K."/>
            <person name="Cheuk R.F."/>
            <person name="Karlin-Newmann G."/>
            <person name="Liu S.X."/>
            <person name="Lam B."/>
            <person name="Sakano H."/>
            <person name="Wu T."/>
            <person name="Yu G."/>
            <person name="Miranda M."/>
            <person name="Quach H.L."/>
            <person name="Tripp M."/>
            <person name="Chang C.H."/>
            <person name="Lee J.M."/>
            <person name="Toriumi M.J."/>
            <person name="Chan M.M."/>
            <person name="Tang C.C."/>
            <person name="Onodera C.S."/>
            <person name="Deng J.M."/>
            <person name="Akiyama K."/>
            <person name="Ansari Y."/>
            <person name="Arakawa T."/>
            <person name="Banh J."/>
            <person name="Banno F."/>
            <person name="Bowser L."/>
            <person name="Brooks S.Y."/>
            <person name="Carninci P."/>
            <person name="Chao Q."/>
            <person name="Choy N."/>
            <person name="Enju A."/>
            <person name="Goldsmith A.D."/>
            <person name="Gurjal M."/>
            <person name="Hansen N.F."/>
            <person name="Hayashizaki Y."/>
            <person name="Johnson-Hopson C."/>
            <person name="Hsuan V.W."/>
            <person name="Iida K."/>
            <person name="Karnes M."/>
            <person name="Khan S."/>
            <person name="Koesema E."/>
            <person name="Ishida J."/>
            <person name="Jiang P.X."/>
            <person name="Jones T."/>
            <person name="Kawai J."/>
            <person name="Kamiya A."/>
            <person name="Meyers C."/>
            <person name="Nakajima M."/>
            <person name="Narusaka M."/>
            <person name="Seki M."/>
            <person name="Sakurai T."/>
            <person name="Satou M."/>
            <person name="Tamse R."/>
            <person name="Vaysberg M."/>
            <person name="Wallender E.K."/>
            <person name="Wong C."/>
            <person name="Yamamura Y."/>
            <person name="Yuan S."/>
            <person name="Shinozaki K."/>
            <person name="Davis R.W."/>
            <person name="Theologis A."/>
            <person name="Ecker J.R."/>
        </authorList>
    </citation>
    <scope>NUCLEOTIDE SEQUENCE [LARGE SCALE MRNA] (ISOFORM 2)</scope>
    <source>
        <strain>cv. Columbia</strain>
    </source>
</reference>
<reference key="4">
    <citation type="journal article" date="2015" name="Front. Plant Sci.">
        <title>An Arabidopsis neutral ceramidase mutant ncer1 accumulates hydroxyceramides and is sensitive to oxidative stress.</title>
        <authorList>
            <person name="Li J."/>
            <person name="Bi F.-C."/>
            <person name="Yin J."/>
            <person name="Wu J.-X."/>
            <person name="Rong C."/>
            <person name="Wu J.-L."/>
            <person name="Yao N."/>
        </authorList>
    </citation>
    <scope>FUNCTION</scope>
    <scope>DISRUPTION PHENOTYPE</scope>
    <scope>GENE FAMILY</scope>
    <scope>NOMENCLATURE</scope>
    <source>
        <strain>cv. Columbia</strain>
    </source>
</reference>